<proteinExistence type="evidence at protein level"/>
<evidence type="ECO:0000250" key="1">
    <source>
        <dbReference type="UniProtKB" id="Q9GZN8"/>
    </source>
</evidence>
<evidence type="ECO:0000269" key="2">
    <source>
    </source>
</evidence>
<evidence type="ECO:0000305" key="3"/>
<evidence type="ECO:0000312" key="4">
    <source>
        <dbReference type="MGI" id="MGI:1914576"/>
    </source>
</evidence>
<evidence type="ECO:0007744" key="5">
    <source>
    </source>
</evidence>
<keyword id="KW-0007">Acetylation</keyword>
<keyword id="KW-0597">Phosphoprotein</keyword>
<keyword id="KW-1185">Reference proteome</keyword>
<keyword id="KW-0964">Secreted</keyword>
<reference key="1">
    <citation type="journal article" date="2005" name="Science">
        <title>The transcriptional landscape of the mammalian genome.</title>
        <authorList>
            <person name="Carninci P."/>
            <person name="Kasukawa T."/>
            <person name="Katayama S."/>
            <person name="Gough J."/>
            <person name="Frith M.C."/>
            <person name="Maeda N."/>
            <person name="Oyama R."/>
            <person name="Ravasi T."/>
            <person name="Lenhard B."/>
            <person name="Wells C."/>
            <person name="Kodzius R."/>
            <person name="Shimokawa K."/>
            <person name="Bajic V.B."/>
            <person name="Brenner S.E."/>
            <person name="Batalov S."/>
            <person name="Forrest A.R."/>
            <person name="Zavolan M."/>
            <person name="Davis M.J."/>
            <person name="Wilming L.G."/>
            <person name="Aidinis V."/>
            <person name="Allen J.E."/>
            <person name="Ambesi-Impiombato A."/>
            <person name="Apweiler R."/>
            <person name="Aturaliya R.N."/>
            <person name="Bailey T.L."/>
            <person name="Bansal M."/>
            <person name="Baxter L."/>
            <person name="Beisel K.W."/>
            <person name="Bersano T."/>
            <person name="Bono H."/>
            <person name="Chalk A.M."/>
            <person name="Chiu K.P."/>
            <person name="Choudhary V."/>
            <person name="Christoffels A."/>
            <person name="Clutterbuck D.R."/>
            <person name="Crowe M.L."/>
            <person name="Dalla E."/>
            <person name="Dalrymple B.P."/>
            <person name="de Bono B."/>
            <person name="Della Gatta G."/>
            <person name="di Bernardo D."/>
            <person name="Down T."/>
            <person name="Engstrom P."/>
            <person name="Fagiolini M."/>
            <person name="Faulkner G."/>
            <person name="Fletcher C.F."/>
            <person name="Fukushima T."/>
            <person name="Furuno M."/>
            <person name="Futaki S."/>
            <person name="Gariboldi M."/>
            <person name="Georgii-Hemming P."/>
            <person name="Gingeras T.R."/>
            <person name="Gojobori T."/>
            <person name="Green R.E."/>
            <person name="Gustincich S."/>
            <person name="Harbers M."/>
            <person name="Hayashi Y."/>
            <person name="Hensch T.K."/>
            <person name="Hirokawa N."/>
            <person name="Hill D."/>
            <person name="Huminiecki L."/>
            <person name="Iacono M."/>
            <person name="Ikeo K."/>
            <person name="Iwama A."/>
            <person name="Ishikawa T."/>
            <person name="Jakt M."/>
            <person name="Kanapin A."/>
            <person name="Katoh M."/>
            <person name="Kawasawa Y."/>
            <person name="Kelso J."/>
            <person name="Kitamura H."/>
            <person name="Kitano H."/>
            <person name="Kollias G."/>
            <person name="Krishnan S.P."/>
            <person name="Kruger A."/>
            <person name="Kummerfeld S.K."/>
            <person name="Kurochkin I.V."/>
            <person name="Lareau L.F."/>
            <person name="Lazarevic D."/>
            <person name="Lipovich L."/>
            <person name="Liu J."/>
            <person name="Liuni S."/>
            <person name="McWilliam S."/>
            <person name="Madan Babu M."/>
            <person name="Madera M."/>
            <person name="Marchionni L."/>
            <person name="Matsuda H."/>
            <person name="Matsuzawa S."/>
            <person name="Miki H."/>
            <person name="Mignone F."/>
            <person name="Miyake S."/>
            <person name="Morris K."/>
            <person name="Mottagui-Tabar S."/>
            <person name="Mulder N."/>
            <person name="Nakano N."/>
            <person name="Nakauchi H."/>
            <person name="Ng P."/>
            <person name="Nilsson R."/>
            <person name="Nishiguchi S."/>
            <person name="Nishikawa S."/>
            <person name="Nori F."/>
            <person name="Ohara O."/>
            <person name="Okazaki Y."/>
            <person name="Orlando V."/>
            <person name="Pang K.C."/>
            <person name="Pavan W.J."/>
            <person name="Pavesi G."/>
            <person name="Pesole G."/>
            <person name="Petrovsky N."/>
            <person name="Piazza S."/>
            <person name="Reed J."/>
            <person name="Reid J.F."/>
            <person name="Ring B.Z."/>
            <person name="Ringwald M."/>
            <person name="Rost B."/>
            <person name="Ruan Y."/>
            <person name="Salzberg S.L."/>
            <person name="Sandelin A."/>
            <person name="Schneider C."/>
            <person name="Schoenbach C."/>
            <person name="Sekiguchi K."/>
            <person name="Semple C.A."/>
            <person name="Seno S."/>
            <person name="Sessa L."/>
            <person name="Sheng Y."/>
            <person name="Shibata Y."/>
            <person name="Shimada H."/>
            <person name="Shimada K."/>
            <person name="Silva D."/>
            <person name="Sinclair B."/>
            <person name="Sperling S."/>
            <person name="Stupka E."/>
            <person name="Sugiura K."/>
            <person name="Sultana R."/>
            <person name="Takenaka Y."/>
            <person name="Taki K."/>
            <person name="Tammoja K."/>
            <person name="Tan S.L."/>
            <person name="Tang S."/>
            <person name="Taylor M.S."/>
            <person name="Tegner J."/>
            <person name="Teichmann S.A."/>
            <person name="Ueda H.R."/>
            <person name="van Nimwegen E."/>
            <person name="Verardo R."/>
            <person name="Wei C.L."/>
            <person name="Yagi K."/>
            <person name="Yamanishi H."/>
            <person name="Zabarovsky E."/>
            <person name="Zhu S."/>
            <person name="Zimmer A."/>
            <person name="Hide W."/>
            <person name="Bult C."/>
            <person name="Grimmond S.M."/>
            <person name="Teasdale R.D."/>
            <person name="Liu E.T."/>
            <person name="Brusic V."/>
            <person name="Quackenbush J."/>
            <person name="Wahlestedt C."/>
            <person name="Mattick J.S."/>
            <person name="Hume D.A."/>
            <person name="Kai C."/>
            <person name="Sasaki D."/>
            <person name="Tomaru Y."/>
            <person name="Fukuda S."/>
            <person name="Kanamori-Katayama M."/>
            <person name="Suzuki M."/>
            <person name="Aoki J."/>
            <person name="Arakawa T."/>
            <person name="Iida J."/>
            <person name="Imamura K."/>
            <person name="Itoh M."/>
            <person name="Kato T."/>
            <person name="Kawaji H."/>
            <person name="Kawagashira N."/>
            <person name="Kawashima T."/>
            <person name="Kojima M."/>
            <person name="Kondo S."/>
            <person name="Konno H."/>
            <person name="Nakano K."/>
            <person name="Ninomiya N."/>
            <person name="Nishio T."/>
            <person name="Okada M."/>
            <person name="Plessy C."/>
            <person name="Shibata K."/>
            <person name="Shiraki T."/>
            <person name="Suzuki S."/>
            <person name="Tagami M."/>
            <person name="Waki K."/>
            <person name="Watahiki A."/>
            <person name="Okamura-Oho Y."/>
            <person name="Suzuki H."/>
            <person name="Kawai J."/>
            <person name="Hayashizaki Y."/>
        </authorList>
    </citation>
    <scope>NUCLEOTIDE SEQUENCE [LARGE SCALE MRNA]</scope>
    <source>
        <strain>C57BL/6J</strain>
        <tissue>Embryo</tissue>
    </source>
</reference>
<reference key="2">
    <citation type="journal article" date="2004" name="Genome Res.">
        <title>The status, quality, and expansion of the NIH full-length cDNA project: the Mammalian Gene Collection (MGC).</title>
        <authorList>
            <consortium name="The MGC Project Team"/>
        </authorList>
    </citation>
    <scope>NUCLEOTIDE SEQUENCE [LARGE SCALE MRNA]</scope>
    <source>
        <tissue>Mammary gland</tissue>
    </source>
</reference>
<reference key="3">
    <citation type="journal article" date="2010" name="Cell">
        <title>A tissue-specific atlas of mouse protein phosphorylation and expression.</title>
        <authorList>
            <person name="Huttlin E.L."/>
            <person name="Jedrychowski M.P."/>
            <person name="Elias J.E."/>
            <person name="Goswami T."/>
            <person name="Rad R."/>
            <person name="Beausoleil S.A."/>
            <person name="Villen J."/>
            <person name="Haas W."/>
            <person name="Sowa M.E."/>
            <person name="Gygi S.P."/>
        </authorList>
    </citation>
    <scope>PHOSPHORYLATION [LARGE SCALE ANALYSIS] AT THR-147</scope>
    <scope>IDENTIFICATION BY MASS SPECTROMETRY [LARGE SCALE ANALYSIS]</scope>
    <source>
        <tissue>Brain</tissue>
        <tissue>Brown adipose tissue</tissue>
        <tissue>Kidney</tissue>
        <tissue>Lung</tissue>
        <tissue>Spleen</tissue>
        <tissue>Testis</tissue>
    </source>
</reference>
<reference key="4">
    <citation type="journal article" date="2022" name="Nat. Commun.">
        <title>A brown fat-enriched adipokine Adissp controls adipose thermogenesis and glucose homeostasis.</title>
        <authorList>
            <person name="Chen Q."/>
            <person name="Huang L."/>
            <person name="Pan D."/>
            <person name="Hu K."/>
            <person name="Li R."/>
            <person name="Friedline R.H."/>
            <person name="Kim J.K."/>
            <person name="Zhu L.J."/>
            <person name="Guertin D.A."/>
            <person name="Wang Y.X."/>
        </authorList>
    </citation>
    <scope>TISSUE SPECIFICITY</scope>
    <scope>SUBCELLULAR LOCATION</scope>
    <scope>FUNCTION</scope>
    <scope>DISRUPTION PHENOTYPE</scope>
</reference>
<accession>Q9D1K7</accession>
<accession>Q9CVT3</accession>
<feature type="initiator methionine" description="Removed" evidence="1">
    <location>
        <position position="1"/>
    </location>
</feature>
<feature type="chain" id="PRO_0000079420" description="Adipose-secreted signaling protein">
    <location>
        <begin position="2"/>
        <end position="174"/>
    </location>
</feature>
<feature type="modified residue" description="N-acetylalanine" evidence="1">
    <location>
        <position position="2"/>
    </location>
</feature>
<feature type="modified residue" description="Phosphothreonine" evidence="5">
    <location>
        <position position="147"/>
    </location>
</feature>
<gene>
    <name evidence="4" type="primary">Adissp</name>
</gene>
<sequence>MAAANRGSKPRVRSIRFAAGHDAEGSQSHVHFDEKLHDSVVMVTQESDNSFLVKVGFLKILHRYEITFTLPPVRRLSKDIRETPVHSLHLKLLSVTPTSEGYSIKCEYSAHKEGVLKEEMLLACEGDIGTCVRVTVQARVMDRHHGTPMLLDGVKCVGAELEYDSEQSDWLGFD</sequence>
<comment type="function">
    <text evidence="2">Adipocyte-secreted protein (adipokine) that acts as a key regulator for white adipose tissue (WAT) thermogenesis and glucose homeostasis at least in part through activation of protein kinase A (PKA).</text>
</comment>
<comment type="subcellular location">
    <subcellularLocation>
        <location evidence="2">Secreted</location>
    </subcellularLocation>
</comment>
<comment type="tissue specificity">
    <text evidence="2">Expression is adipose-specific and highly brown adipose tissue-enriched.</text>
</comment>
<comment type="disruption phenotype">
    <text evidence="2">Adipose-specific Adissp knockout mice are defective in WAT browning, and are susceptible to high fat diet-induced obesity and hyperglycemia.</text>
</comment>
<comment type="similarity">
    <text evidence="3">Belongs to the ADISSP family.</text>
</comment>
<protein>
    <recommendedName>
        <fullName evidence="4">Adipose-secreted signaling protein</fullName>
    </recommendedName>
</protein>
<organism>
    <name type="scientific">Mus musculus</name>
    <name type="common">Mouse</name>
    <dbReference type="NCBI Taxonomy" id="10090"/>
    <lineage>
        <taxon>Eukaryota</taxon>
        <taxon>Metazoa</taxon>
        <taxon>Chordata</taxon>
        <taxon>Craniata</taxon>
        <taxon>Vertebrata</taxon>
        <taxon>Euteleostomi</taxon>
        <taxon>Mammalia</taxon>
        <taxon>Eutheria</taxon>
        <taxon>Euarchontoglires</taxon>
        <taxon>Glires</taxon>
        <taxon>Rodentia</taxon>
        <taxon>Myomorpha</taxon>
        <taxon>Muroidea</taxon>
        <taxon>Muridae</taxon>
        <taxon>Murinae</taxon>
        <taxon>Mus</taxon>
        <taxon>Mus</taxon>
    </lineage>
</organism>
<name>ADSSP_MOUSE</name>
<dbReference type="EMBL" id="AK003406">
    <property type="protein sequence ID" value="BAB22770.1"/>
    <property type="molecule type" value="mRNA"/>
</dbReference>
<dbReference type="EMBL" id="BC006041">
    <property type="protein sequence ID" value="AAH06041.1"/>
    <property type="molecule type" value="mRNA"/>
</dbReference>
<dbReference type="CCDS" id="CCDS16756.1"/>
<dbReference type="RefSeq" id="NP_080367.1">
    <property type="nucleotide sequence ID" value="NM_026091.3"/>
</dbReference>
<dbReference type="RefSeq" id="XP_011238047.1">
    <property type="nucleotide sequence ID" value="XM_011239745.3"/>
</dbReference>
<dbReference type="RefSeq" id="XP_030107847.1">
    <property type="nucleotide sequence ID" value="XM_030251987.2"/>
</dbReference>
<dbReference type="BioGRID" id="212107">
    <property type="interactions" value="14"/>
</dbReference>
<dbReference type="FunCoup" id="Q9D1K7">
    <property type="interactions" value="222"/>
</dbReference>
<dbReference type="STRING" id="10090.ENSMUSP00000028800"/>
<dbReference type="iPTMnet" id="Q9D1K7"/>
<dbReference type="PhosphoSitePlus" id="Q9D1K7"/>
<dbReference type="SwissPalm" id="Q9D1K7"/>
<dbReference type="REPRODUCTION-2DPAGE" id="IPI00133853"/>
<dbReference type="PaxDb" id="10090-ENSMUSP00000099477"/>
<dbReference type="Pumba" id="Q9D1K7"/>
<dbReference type="Antibodypedia" id="54581">
    <property type="antibodies" value="45 antibodies from 9 providers"/>
</dbReference>
<dbReference type="Ensembl" id="ENSMUST00000103188.10">
    <property type="protein sequence ID" value="ENSMUSP00000099477.4"/>
    <property type="gene ID" value="ENSMUSG00000027327.17"/>
</dbReference>
<dbReference type="GeneID" id="67326"/>
<dbReference type="KEGG" id="mmu:67326"/>
<dbReference type="UCSC" id="uc008mks.1">
    <property type="organism name" value="mouse"/>
</dbReference>
<dbReference type="AGR" id="MGI:1914576"/>
<dbReference type="CTD" id="54976"/>
<dbReference type="MGI" id="MGI:1914576">
    <property type="gene designation" value="Adissp"/>
</dbReference>
<dbReference type="VEuPathDB" id="HostDB:ENSMUSG00000027327"/>
<dbReference type="eggNOG" id="ENOG502RXJD">
    <property type="taxonomic scope" value="Eukaryota"/>
</dbReference>
<dbReference type="GeneTree" id="ENSGT00390000008711"/>
<dbReference type="HOGENOM" id="CLU_094626_2_0_1"/>
<dbReference type="InParanoid" id="Q9D1K7"/>
<dbReference type="OMA" id="GVRCIGM"/>
<dbReference type="OrthoDB" id="6246153at2759"/>
<dbReference type="PhylomeDB" id="Q9D1K7"/>
<dbReference type="TreeFam" id="TF323780"/>
<dbReference type="BioGRID-ORCS" id="67326">
    <property type="hits" value="6 hits in 79 CRISPR screens"/>
</dbReference>
<dbReference type="PRO" id="PR:Q9D1K7"/>
<dbReference type="Proteomes" id="UP000000589">
    <property type="component" value="Chromosome 2"/>
</dbReference>
<dbReference type="RNAct" id="Q9D1K7">
    <property type="molecule type" value="protein"/>
</dbReference>
<dbReference type="Bgee" id="ENSMUSG00000027327">
    <property type="expression patterns" value="Expressed in seminiferous tubule of testis and 253 other cell types or tissues"/>
</dbReference>
<dbReference type="ExpressionAtlas" id="Q9D1K7">
    <property type="expression patterns" value="baseline and differential"/>
</dbReference>
<dbReference type="GO" id="GO:0005615">
    <property type="term" value="C:extracellular space"/>
    <property type="evidence" value="ECO:0000314"/>
    <property type="project" value="UniProtKB"/>
</dbReference>
<dbReference type="GO" id="GO:1990845">
    <property type="term" value="P:adaptive thermogenesis"/>
    <property type="evidence" value="ECO:0000314"/>
    <property type="project" value="UniProtKB"/>
</dbReference>
<dbReference type="GO" id="GO:0042593">
    <property type="term" value="P:glucose homeostasis"/>
    <property type="evidence" value="ECO:0000315"/>
    <property type="project" value="UniProtKB"/>
</dbReference>
<dbReference type="GO" id="GO:0010739">
    <property type="term" value="P:positive regulation of protein kinase A signaling"/>
    <property type="evidence" value="ECO:0000314"/>
    <property type="project" value="UniProtKB"/>
</dbReference>
<dbReference type="InterPro" id="IPR026794">
    <property type="entry name" value="ADISSP"/>
</dbReference>
<dbReference type="PANTHER" id="PTHR13287">
    <property type="entry name" value="ADIPOSE-SECRETED SIGNALING PROTEIN"/>
    <property type="match status" value="1"/>
</dbReference>
<dbReference type="PANTHER" id="PTHR13287:SF2">
    <property type="entry name" value="ADIPOSE-SECRETED SIGNALING PROTEIN"/>
    <property type="match status" value="1"/>
</dbReference>
<dbReference type="Pfam" id="PF15006">
    <property type="entry name" value="DUF4517"/>
    <property type="match status" value="1"/>
</dbReference>